<evidence type="ECO:0000255" key="1">
    <source>
        <dbReference type="HAMAP-Rule" id="MF_00022"/>
    </source>
</evidence>
<comment type="function">
    <text evidence="1">Catalyzes the attachment of glutamate to tRNA(Glu) in a two-step reaction: glutamate is first activated by ATP to form Glu-AMP and then transferred to the acceptor end of tRNA(Glu).</text>
</comment>
<comment type="catalytic activity">
    <reaction evidence="1">
        <text>tRNA(Glu) + L-glutamate + ATP = L-glutamyl-tRNA(Glu) + AMP + diphosphate</text>
        <dbReference type="Rhea" id="RHEA:23540"/>
        <dbReference type="Rhea" id="RHEA-COMP:9663"/>
        <dbReference type="Rhea" id="RHEA-COMP:9680"/>
        <dbReference type="ChEBI" id="CHEBI:29985"/>
        <dbReference type="ChEBI" id="CHEBI:30616"/>
        <dbReference type="ChEBI" id="CHEBI:33019"/>
        <dbReference type="ChEBI" id="CHEBI:78442"/>
        <dbReference type="ChEBI" id="CHEBI:78520"/>
        <dbReference type="ChEBI" id="CHEBI:456215"/>
        <dbReference type="EC" id="6.1.1.17"/>
    </reaction>
</comment>
<comment type="subunit">
    <text evidence="1">Monomer.</text>
</comment>
<comment type="subcellular location">
    <subcellularLocation>
        <location evidence="1">Cytoplasm</location>
    </subcellularLocation>
</comment>
<comment type="similarity">
    <text evidence="1">Belongs to the class-I aminoacyl-tRNA synthetase family. Glutamate--tRNA ligase type 1 subfamily.</text>
</comment>
<accession>B0B818</accession>
<keyword id="KW-0030">Aminoacyl-tRNA synthetase</keyword>
<keyword id="KW-0067">ATP-binding</keyword>
<keyword id="KW-0963">Cytoplasm</keyword>
<keyword id="KW-0436">Ligase</keyword>
<keyword id="KW-0547">Nucleotide-binding</keyword>
<keyword id="KW-0648">Protein biosynthesis</keyword>
<protein>
    <recommendedName>
        <fullName evidence="1">Glutamate--tRNA ligase</fullName>
        <ecNumber evidence="1">6.1.1.17</ecNumber>
    </recommendedName>
    <alternativeName>
        <fullName evidence="1">Glutamyl-tRNA synthetase</fullName>
        <shortName evidence="1">GluRS</shortName>
    </alternativeName>
</protein>
<sequence>MTVQNVRVRVAPSPTGDPHVGTAYMALFNEVFARKYNGQMILRIEDTDQTRSRDDYEANIFSALKWCGIRWDEGPDVGGAYGPYRQSERTEIYKKYAEILLQTDCAYKCFATPQELQEMRAVASTLGYRGGYDRRYRYLSPEEVRQREEQGQPYTIRLKVPLTGESVFEDQCKGRVVFPWADVDDQVLVKSDGFPTYHFANVVDDHLMGITHVLRGEEWLSSTPKHLLLYKAFGWEPPQFFHMPLLLNPDGSKLSKRKNPTSIFYYRDAGYKKEAFMNFLTLMGYSMEGDEEIYSMQRLIEAFDPKRIGRSGAVFDIRKLDWMNKHYLNHEGSPESLLQELKGWLWNDEFLLKILPLCQSRITTLADFVGLTSFFFTAIPQYSKEELLPSSLKQEQAAVMLYSLVKYLEKKDLWEKDFFYQGSKWLAEAFQVHHKKAVIPLLYVAITGAKQGLPLFDSMELLGKARTRARLTYAQNLLGGVSKKVQQQVDKALQDQPLEDIRFLDF</sequence>
<gene>
    <name evidence="1" type="primary">gltX</name>
    <name type="ordered locus">CTL0705</name>
</gene>
<name>SYE_CHLT2</name>
<reference key="1">
    <citation type="journal article" date="2008" name="Genome Res.">
        <title>Chlamydia trachomatis: genome sequence analysis of lymphogranuloma venereum isolates.</title>
        <authorList>
            <person name="Thomson N.R."/>
            <person name="Holden M.T.G."/>
            <person name="Carder C."/>
            <person name="Lennard N."/>
            <person name="Lockey S.J."/>
            <person name="Marsh P."/>
            <person name="Skipp P."/>
            <person name="O'Connor C.D."/>
            <person name="Goodhead I."/>
            <person name="Norbertzcak H."/>
            <person name="Harris B."/>
            <person name="Ormond D."/>
            <person name="Rance R."/>
            <person name="Quail M.A."/>
            <person name="Parkhill J."/>
            <person name="Stephens R.S."/>
            <person name="Clarke I.N."/>
        </authorList>
    </citation>
    <scope>NUCLEOTIDE SEQUENCE [LARGE SCALE GENOMIC DNA]</scope>
    <source>
        <strain>ATCC VR-902B / DSM 19102 / 434/Bu</strain>
    </source>
</reference>
<organism>
    <name type="scientific">Chlamydia trachomatis serovar L2 (strain ATCC VR-902B / DSM 19102 / 434/Bu)</name>
    <dbReference type="NCBI Taxonomy" id="471472"/>
    <lineage>
        <taxon>Bacteria</taxon>
        <taxon>Pseudomonadati</taxon>
        <taxon>Chlamydiota</taxon>
        <taxon>Chlamydiia</taxon>
        <taxon>Chlamydiales</taxon>
        <taxon>Chlamydiaceae</taxon>
        <taxon>Chlamydia/Chlamydophila group</taxon>
        <taxon>Chlamydia</taxon>
    </lineage>
</organism>
<proteinExistence type="inferred from homology"/>
<dbReference type="EC" id="6.1.1.17" evidence="1"/>
<dbReference type="EMBL" id="AM884176">
    <property type="protein sequence ID" value="CAP04144.1"/>
    <property type="molecule type" value="Genomic_DNA"/>
</dbReference>
<dbReference type="RefSeq" id="WP_009873815.1">
    <property type="nucleotide sequence ID" value="NC_010287.1"/>
</dbReference>
<dbReference type="RefSeq" id="YP_001654777.1">
    <property type="nucleotide sequence ID" value="NC_010287.1"/>
</dbReference>
<dbReference type="SMR" id="B0B818"/>
<dbReference type="KEGG" id="ctb:CTL0705"/>
<dbReference type="PATRIC" id="fig|471472.4.peg.757"/>
<dbReference type="HOGENOM" id="CLU_015768_6_3_0"/>
<dbReference type="Proteomes" id="UP001154402">
    <property type="component" value="Chromosome"/>
</dbReference>
<dbReference type="GO" id="GO:0005829">
    <property type="term" value="C:cytosol"/>
    <property type="evidence" value="ECO:0007669"/>
    <property type="project" value="TreeGrafter"/>
</dbReference>
<dbReference type="GO" id="GO:0005524">
    <property type="term" value="F:ATP binding"/>
    <property type="evidence" value="ECO:0007669"/>
    <property type="project" value="UniProtKB-UniRule"/>
</dbReference>
<dbReference type="GO" id="GO:0004818">
    <property type="term" value="F:glutamate-tRNA ligase activity"/>
    <property type="evidence" value="ECO:0007669"/>
    <property type="project" value="UniProtKB-UniRule"/>
</dbReference>
<dbReference type="GO" id="GO:0000049">
    <property type="term" value="F:tRNA binding"/>
    <property type="evidence" value="ECO:0007669"/>
    <property type="project" value="InterPro"/>
</dbReference>
<dbReference type="GO" id="GO:0008270">
    <property type="term" value="F:zinc ion binding"/>
    <property type="evidence" value="ECO:0007669"/>
    <property type="project" value="InterPro"/>
</dbReference>
<dbReference type="GO" id="GO:0006424">
    <property type="term" value="P:glutamyl-tRNA aminoacylation"/>
    <property type="evidence" value="ECO:0007669"/>
    <property type="project" value="UniProtKB-UniRule"/>
</dbReference>
<dbReference type="CDD" id="cd00808">
    <property type="entry name" value="GluRS_core"/>
    <property type="match status" value="1"/>
</dbReference>
<dbReference type="FunFam" id="1.10.10.350:FF:000014">
    <property type="entry name" value="Glutamate--tRNA ligase"/>
    <property type="match status" value="1"/>
</dbReference>
<dbReference type="FunFam" id="3.40.50.620:FF:000329">
    <property type="entry name" value="Glutamate--tRNA ligase"/>
    <property type="match status" value="1"/>
</dbReference>
<dbReference type="Gene3D" id="1.10.10.350">
    <property type="match status" value="1"/>
</dbReference>
<dbReference type="Gene3D" id="3.40.50.620">
    <property type="entry name" value="HUPs"/>
    <property type="match status" value="1"/>
</dbReference>
<dbReference type="HAMAP" id="MF_00022">
    <property type="entry name" value="Glu_tRNA_synth_type1"/>
    <property type="match status" value="1"/>
</dbReference>
<dbReference type="InterPro" id="IPR045462">
    <property type="entry name" value="aa-tRNA-synth_I_cd-bd"/>
</dbReference>
<dbReference type="InterPro" id="IPR020751">
    <property type="entry name" value="aa-tRNA-synth_I_codon-bd_sub2"/>
</dbReference>
<dbReference type="InterPro" id="IPR001412">
    <property type="entry name" value="aa-tRNA-synth_I_CS"/>
</dbReference>
<dbReference type="InterPro" id="IPR008925">
    <property type="entry name" value="aa_tRNA-synth_I_cd-bd_sf"/>
</dbReference>
<dbReference type="InterPro" id="IPR004527">
    <property type="entry name" value="Glu-tRNA-ligase_bac/mito"/>
</dbReference>
<dbReference type="InterPro" id="IPR000924">
    <property type="entry name" value="Glu/Gln-tRNA-synth"/>
</dbReference>
<dbReference type="InterPro" id="IPR020058">
    <property type="entry name" value="Glu/Gln-tRNA-synth_Ib_cat-dom"/>
</dbReference>
<dbReference type="InterPro" id="IPR049940">
    <property type="entry name" value="GluQ/Sye"/>
</dbReference>
<dbReference type="InterPro" id="IPR033910">
    <property type="entry name" value="GluRS_core"/>
</dbReference>
<dbReference type="InterPro" id="IPR014729">
    <property type="entry name" value="Rossmann-like_a/b/a_fold"/>
</dbReference>
<dbReference type="NCBIfam" id="TIGR00464">
    <property type="entry name" value="gltX_bact"/>
    <property type="match status" value="1"/>
</dbReference>
<dbReference type="PANTHER" id="PTHR43311">
    <property type="entry name" value="GLUTAMATE--TRNA LIGASE"/>
    <property type="match status" value="1"/>
</dbReference>
<dbReference type="PANTHER" id="PTHR43311:SF2">
    <property type="entry name" value="GLUTAMATE--TRNA LIGASE, MITOCHONDRIAL-RELATED"/>
    <property type="match status" value="1"/>
</dbReference>
<dbReference type="Pfam" id="PF19269">
    <property type="entry name" value="Anticodon_2"/>
    <property type="match status" value="1"/>
</dbReference>
<dbReference type="Pfam" id="PF00749">
    <property type="entry name" value="tRNA-synt_1c"/>
    <property type="match status" value="1"/>
</dbReference>
<dbReference type="PRINTS" id="PR00987">
    <property type="entry name" value="TRNASYNTHGLU"/>
</dbReference>
<dbReference type="SUPFAM" id="SSF48163">
    <property type="entry name" value="An anticodon-binding domain of class I aminoacyl-tRNA synthetases"/>
    <property type="match status" value="1"/>
</dbReference>
<dbReference type="SUPFAM" id="SSF52374">
    <property type="entry name" value="Nucleotidylyl transferase"/>
    <property type="match status" value="1"/>
</dbReference>
<dbReference type="PROSITE" id="PS00178">
    <property type="entry name" value="AA_TRNA_LIGASE_I"/>
    <property type="match status" value="1"/>
</dbReference>
<feature type="chain" id="PRO_1000090063" description="Glutamate--tRNA ligase">
    <location>
        <begin position="1"/>
        <end position="506"/>
    </location>
</feature>
<feature type="short sequence motif" description="'HIGH' region" evidence="1">
    <location>
        <begin position="12"/>
        <end position="22"/>
    </location>
</feature>
<feature type="short sequence motif" description="'KMSKS' region" evidence="1">
    <location>
        <begin position="253"/>
        <end position="257"/>
    </location>
</feature>
<feature type="binding site" evidence="1">
    <location>
        <position position="256"/>
    </location>
    <ligand>
        <name>ATP</name>
        <dbReference type="ChEBI" id="CHEBI:30616"/>
    </ligand>
</feature>